<comment type="similarity">
    <text evidence="1">Belongs to the CinA family.</text>
</comment>
<proteinExistence type="inferred from homology"/>
<evidence type="ECO:0000255" key="1">
    <source>
        <dbReference type="HAMAP-Rule" id="MF_00226"/>
    </source>
</evidence>
<feature type="chain" id="PRO_1000058697" description="Putative competence-damage inducible protein">
    <location>
        <begin position="1"/>
        <end position="409"/>
    </location>
</feature>
<name>CINA_CLOB1</name>
<sequence length="409" mass="44999">MKAEILCVGTELLLGDIVNTNAQYISKELANIGIEVYHHSVIGDNENRLLKELERAFNYCDLVITTGGLGPTKDDLTKESVAKFFQEDLVLHEKSLKQIEKRLLCFNKSMTESNKKQAYFPKNCEILENPNGTAPGFIIEKDNKIAIILPGPPYEMQPMFENKVIPYLEKLTSSTIKSKVLRITGIGESDVADLISDILENQTNPTVAPYAKQGETTLRITAKANSEEKALNLIVPIEKKIRQILEDNIYGSGETSLEEVVANILVKRNLTIATAESCTGGLLAGKLINFPGISSVFLEGAITYSNESKINRLNVKKETLEKYTAVSKEVALEMAEGIAKSAGTNIGISTTGVAGPGGGTYDKPIGLIYIGLYINGKTFVKELNYSGNRQFIRNITVTRALDFLRRNLK</sequence>
<dbReference type="EMBL" id="CP000726">
    <property type="protein sequence ID" value="ABS33412.1"/>
    <property type="molecule type" value="Genomic_DNA"/>
</dbReference>
<dbReference type="RefSeq" id="WP_011986038.1">
    <property type="nucleotide sequence ID" value="NC_009697.1"/>
</dbReference>
<dbReference type="SMR" id="A7FQM1"/>
<dbReference type="KEGG" id="cba:CLB_0252"/>
<dbReference type="HOGENOM" id="CLU_030805_9_3_9"/>
<dbReference type="CDD" id="cd00885">
    <property type="entry name" value="cinA"/>
    <property type="match status" value="1"/>
</dbReference>
<dbReference type="Gene3D" id="3.30.70.2860">
    <property type="match status" value="1"/>
</dbReference>
<dbReference type="Gene3D" id="3.90.950.20">
    <property type="entry name" value="CinA-like"/>
    <property type="match status" value="1"/>
</dbReference>
<dbReference type="Gene3D" id="3.40.980.10">
    <property type="entry name" value="MoaB/Mog-like domain"/>
    <property type="match status" value="1"/>
</dbReference>
<dbReference type="HAMAP" id="MF_00226_B">
    <property type="entry name" value="CinA_B"/>
    <property type="match status" value="1"/>
</dbReference>
<dbReference type="InterPro" id="IPR050101">
    <property type="entry name" value="CinA"/>
</dbReference>
<dbReference type="InterPro" id="IPR036653">
    <property type="entry name" value="CinA-like_C"/>
</dbReference>
<dbReference type="InterPro" id="IPR008136">
    <property type="entry name" value="CinA_C"/>
</dbReference>
<dbReference type="InterPro" id="IPR041424">
    <property type="entry name" value="CinA_KH"/>
</dbReference>
<dbReference type="InterPro" id="IPR008135">
    <property type="entry name" value="Competence-induced_CinA"/>
</dbReference>
<dbReference type="InterPro" id="IPR036425">
    <property type="entry name" value="MoaB/Mog-like_dom_sf"/>
</dbReference>
<dbReference type="InterPro" id="IPR001453">
    <property type="entry name" value="MoaB/Mog_dom"/>
</dbReference>
<dbReference type="NCBIfam" id="TIGR00200">
    <property type="entry name" value="cinA_nterm"/>
    <property type="match status" value="1"/>
</dbReference>
<dbReference type="NCBIfam" id="TIGR00177">
    <property type="entry name" value="molyb_syn"/>
    <property type="match status" value="1"/>
</dbReference>
<dbReference type="NCBIfam" id="TIGR00199">
    <property type="entry name" value="PncC_domain"/>
    <property type="match status" value="1"/>
</dbReference>
<dbReference type="NCBIfam" id="NF001813">
    <property type="entry name" value="PRK00549.1"/>
    <property type="match status" value="1"/>
</dbReference>
<dbReference type="PANTHER" id="PTHR13939">
    <property type="entry name" value="NICOTINAMIDE-NUCLEOTIDE AMIDOHYDROLASE PNCC"/>
    <property type="match status" value="1"/>
</dbReference>
<dbReference type="PANTHER" id="PTHR13939:SF0">
    <property type="entry name" value="NMN AMIDOHYDROLASE-LIKE PROTEIN YFAY"/>
    <property type="match status" value="1"/>
</dbReference>
<dbReference type="Pfam" id="PF02464">
    <property type="entry name" value="CinA"/>
    <property type="match status" value="1"/>
</dbReference>
<dbReference type="Pfam" id="PF18146">
    <property type="entry name" value="CinA_KH"/>
    <property type="match status" value="1"/>
</dbReference>
<dbReference type="Pfam" id="PF00994">
    <property type="entry name" value="MoCF_biosynth"/>
    <property type="match status" value="1"/>
</dbReference>
<dbReference type="PIRSF" id="PIRSF006728">
    <property type="entry name" value="CinA"/>
    <property type="match status" value="1"/>
</dbReference>
<dbReference type="SMART" id="SM00852">
    <property type="entry name" value="MoCF_biosynth"/>
    <property type="match status" value="1"/>
</dbReference>
<dbReference type="SUPFAM" id="SSF142433">
    <property type="entry name" value="CinA-like"/>
    <property type="match status" value="1"/>
</dbReference>
<dbReference type="SUPFAM" id="SSF53218">
    <property type="entry name" value="Molybdenum cofactor biosynthesis proteins"/>
    <property type="match status" value="1"/>
</dbReference>
<protein>
    <recommendedName>
        <fullName evidence="1">Putative competence-damage inducible protein</fullName>
    </recommendedName>
</protein>
<organism>
    <name type="scientific">Clostridium botulinum (strain ATCC 19397 / Type A)</name>
    <dbReference type="NCBI Taxonomy" id="441770"/>
    <lineage>
        <taxon>Bacteria</taxon>
        <taxon>Bacillati</taxon>
        <taxon>Bacillota</taxon>
        <taxon>Clostridia</taxon>
        <taxon>Eubacteriales</taxon>
        <taxon>Clostridiaceae</taxon>
        <taxon>Clostridium</taxon>
    </lineage>
</organism>
<gene>
    <name evidence="1" type="primary">cinA</name>
    <name type="ordered locus">CLB_0252</name>
</gene>
<accession>A7FQM1</accession>
<reference key="1">
    <citation type="journal article" date="2007" name="PLoS ONE">
        <title>Analysis of the neurotoxin complex genes in Clostridium botulinum A1-A4 and B1 strains: BoNT/A3, /Ba4 and /B1 clusters are located within plasmids.</title>
        <authorList>
            <person name="Smith T.J."/>
            <person name="Hill K.K."/>
            <person name="Foley B.T."/>
            <person name="Detter J.C."/>
            <person name="Munk A.C."/>
            <person name="Bruce D.C."/>
            <person name="Doggett N.A."/>
            <person name="Smith L.A."/>
            <person name="Marks J.D."/>
            <person name="Xie G."/>
            <person name="Brettin T.S."/>
        </authorList>
    </citation>
    <scope>NUCLEOTIDE SEQUENCE [LARGE SCALE GENOMIC DNA]</scope>
    <source>
        <strain>ATCC 19397 / Type A</strain>
    </source>
</reference>